<reference key="1">
    <citation type="journal article" date="2011" name="J. Bacteriol.">
        <title>Complete genome sequence of the Thermophilic Bacterium Exiguobacterium sp. AT1b.</title>
        <authorList>
            <person name="Vishnivetskaya T.A."/>
            <person name="Lucas S."/>
            <person name="Copeland A."/>
            <person name="Lapidus A."/>
            <person name="Glavina del Rio T."/>
            <person name="Dalin E."/>
            <person name="Tice H."/>
            <person name="Bruce D.C."/>
            <person name="Goodwin L.A."/>
            <person name="Pitluck S."/>
            <person name="Saunders E."/>
            <person name="Brettin T."/>
            <person name="Detter C."/>
            <person name="Han C."/>
            <person name="Larimer F."/>
            <person name="Land M.L."/>
            <person name="Hauser L.J."/>
            <person name="Kyrpides N.C."/>
            <person name="Ovchinnikova G."/>
            <person name="Kathariou S."/>
            <person name="Ramaley R.F."/>
            <person name="Rodrigues D.F."/>
            <person name="Hendrix C."/>
            <person name="Richardson P."/>
            <person name="Tiedje J.M."/>
        </authorList>
    </citation>
    <scope>NUCLEOTIDE SEQUENCE [LARGE SCALE GENOMIC DNA]</scope>
    <source>
        <strain>ATCC BAA-1283 / AT1b</strain>
    </source>
</reference>
<proteinExistence type="inferred from homology"/>
<feature type="chain" id="PRO_1000202429" description="N-acetylmuramic acid 6-phosphate etherase">
    <location>
        <begin position="1"/>
        <end position="294"/>
    </location>
</feature>
<feature type="domain" description="SIS" evidence="1">
    <location>
        <begin position="54"/>
        <end position="217"/>
    </location>
</feature>
<feature type="active site" description="Proton donor" evidence="1">
    <location>
        <position position="82"/>
    </location>
</feature>
<feature type="active site" evidence="1">
    <location>
        <position position="113"/>
    </location>
</feature>
<keyword id="KW-0119">Carbohydrate metabolism</keyword>
<keyword id="KW-0456">Lyase</keyword>
<protein>
    <recommendedName>
        <fullName evidence="1">N-acetylmuramic acid 6-phosphate etherase</fullName>
        <shortName evidence="1">MurNAc-6-P etherase</shortName>
        <ecNumber evidence="1">4.2.1.126</ecNumber>
    </recommendedName>
    <alternativeName>
        <fullName evidence="1">N-acetylmuramic acid 6-phosphate hydrolase</fullName>
    </alternativeName>
    <alternativeName>
        <fullName evidence="1">N-acetylmuramic acid 6-phosphate lyase</fullName>
    </alternativeName>
</protein>
<dbReference type="EC" id="4.2.1.126" evidence="1"/>
<dbReference type="EMBL" id="CP001615">
    <property type="protein sequence ID" value="ACQ70320.1"/>
    <property type="molecule type" value="Genomic_DNA"/>
</dbReference>
<dbReference type="SMR" id="C4KZ07"/>
<dbReference type="STRING" id="360911.EAT1b_1393"/>
<dbReference type="KEGG" id="eat:EAT1b_1393"/>
<dbReference type="eggNOG" id="COG2103">
    <property type="taxonomic scope" value="Bacteria"/>
</dbReference>
<dbReference type="HOGENOM" id="CLU_049049_1_1_9"/>
<dbReference type="UniPathway" id="UPA00342"/>
<dbReference type="Proteomes" id="UP000000716">
    <property type="component" value="Chromosome"/>
</dbReference>
<dbReference type="GO" id="GO:0097367">
    <property type="term" value="F:carbohydrate derivative binding"/>
    <property type="evidence" value="ECO:0007669"/>
    <property type="project" value="InterPro"/>
</dbReference>
<dbReference type="GO" id="GO:0016835">
    <property type="term" value="F:carbon-oxygen lyase activity"/>
    <property type="evidence" value="ECO:0007669"/>
    <property type="project" value="UniProtKB-UniRule"/>
</dbReference>
<dbReference type="GO" id="GO:0016803">
    <property type="term" value="F:ether hydrolase activity"/>
    <property type="evidence" value="ECO:0007669"/>
    <property type="project" value="TreeGrafter"/>
</dbReference>
<dbReference type="GO" id="GO:0046348">
    <property type="term" value="P:amino sugar catabolic process"/>
    <property type="evidence" value="ECO:0007669"/>
    <property type="project" value="InterPro"/>
</dbReference>
<dbReference type="GO" id="GO:0097173">
    <property type="term" value="P:N-acetylmuramic acid catabolic process"/>
    <property type="evidence" value="ECO:0007669"/>
    <property type="project" value="UniProtKB-UniPathway"/>
</dbReference>
<dbReference type="GO" id="GO:0009254">
    <property type="term" value="P:peptidoglycan turnover"/>
    <property type="evidence" value="ECO:0007669"/>
    <property type="project" value="TreeGrafter"/>
</dbReference>
<dbReference type="CDD" id="cd05007">
    <property type="entry name" value="SIS_Etherase"/>
    <property type="match status" value="1"/>
</dbReference>
<dbReference type="FunFam" id="1.10.8.1080:FF:000001">
    <property type="entry name" value="N-acetylmuramic acid 6-phosphate etherase"/>
    <property type="match status" value="1"/>
</dbReference>
<dbReference type="FunFam" id="3.40.50.10490:FF:000014">
    <property type="entry name" value="N-acetylmuramic acid 6-phosphate etherase"/>
    <property type="match status" value="1"/>
</dbReference>
<dbReference type="Gene3D" id="1.10.8.1080">
    <property type="match status" value="1"/>
</dbReference>
<dbReference type="Gene3D" id="3.40.50.10490">
    <property type="entry name" value="Glucose-6-phosphate isomerase like protein, domain 1"/>
    <property type="match status" value="1"/>
</dbReference>
<dbReference type="HAMAP" id="MF_00068">
    <property type="entry name" value="MurQ"/>
    <property type="match status" value="1"/>
</dbReference>
<dbReference type="InterPro" id="IPR005488">
    <property type="entry name" value="Etherase_MurQ"/>
</dbReference>
<dbReference type="InterPro" id="IPR005486">
    <property type="entry name" value="Glucokinase_regulatory_CS"/>
</dbReference>
<dbReference type="InterPro" id="IPR040190">
    <property type="entry name" value="MURQ/GCKR"/>
</dbReference>
<dbReference type="InterPro" id="IPR001347">
    <property type="entry name" value="SIS_dom"/>
</dbReference>
<dbReference type="InterPro" id="IPR046348">
    <property type="entry name" value="SIS_dom_sf"/>
</dbReference>
<dbReference type="NCBIfam" id="TIGR00274">
    <property type="entry name" value="N-acetylmuramic acid 6-phosphate etherase"/>
    <property type="match status" value="1"/>
</dbReference>
<dbReference type="NCBIfam" id="NF003915">
    <property type="entry name" value="PRK05441.1"/>
    <property type="match status" value="1"/>
</dbReference>
<dbReference type="NCBIfam" id="NF009222">
    <property type="entry name" value="PRK12570.1"/>
    <property type="match status" value="1"/>
</dbReference>
<dbReference type="PANTHER" id="PTHR10088">
    <property type="entry name" value="GLUCOKINASE REGULATORY PROTEIN"/>
    <property type="match status" value="1"/>
</dbReference>
<dbReference type="PANTHER" id="PTHR10088:SF4">
    <property type="entry name" value="GLUCOKINASE REGULATORY PROTEIN"/>
    <property type="match status" value="1"/>
</dbReference>
<dbReference type="Pfam" id="PF22645">
    <property type="entry name" value="GKRP_SIS_N"/>
    <property type="match status" value="1"/>
</dbReference>
<dbReference type="SUPFAM" id="SSF53697">
    <property type="entry name" value="SIS domain"/>
    <property type="match status" value="1"/>
</dbReference>
<dbReference type="PROSITE" id="PS01272">
    <property type="entry name" value="GCKR"/>
    <property type="match status" value="1"/>
</dbReference>
<dbReference type="PROSITE" id="PS51464">
    <property type="entry name" value="SIS"/>
    <property type="match status" value="1"/>
</dbReference>
<accession>C4KZ07</accession>
<evidence type="ECO:0000255" key="1">
    <source>
        <dbReference type="HAMAP-Rule" id="MF_00068"/>
    </source>
</evidence>
<comment type="function">
    <text evidence="1">Specifically catalyzes the cleavage of the D-lactyl ether substituent of MurNAc 6-phosphate, producing GlcNAc 6-phosphate and D-lactate.</text>
</comment>
<comment type="catalytic activity">
    <reaction evidence="1">
        <text>N-acetyl-D-muramate 6-phosphate + H2O = N-acetyl-D-glucosamine 6-phosphate + (R)-lactate</text>
        <dbReference type="Rhea" id="RHEA:26410"/>
        <dbReference type="ChEBI" id="CHEBI:15377"/>
        <dbReference type="ChEBI" id="CHEBI:16004"/>
        <dbReference type="ChEBI" id="CHEBI:57513"/>
        <dbReference type="ChEBI" id="CHEBI:58722"/>
        <dbReference type="EC" id="4.2.1.126"/>
    </reaction>
</comment>
<comment type="pathway">
    <text evidence="1">Amino-sugar metabolism; N-acetylmuramate degradation.</text>
</comment>
<comment type="subunit">
    <text evidence="1">Homodimer.</text>
</comment>
<comment type="miscellaneous">
    <text evidence="1">A lyase-type mechanism (elimination/hydration) is suggested for the cleavage of the lactyl ether bond of MurNAc 6-phosphate, with the formation of an alpha,beta-unsaturated aldehyde intermediate with (E)-stereochemistry, followed by the syn addition of water to give product.</text>
</comment>
<comment type="similarity">
    <text evidence="1">Belongs to the GCKR-like family. MurNAc-6-P etherase subfamily.</text>
</comment>
<sequence length="294" mass="31752">MLDKLATERRNEQTMHLDEMSIEERLTIMNAEDHKVPQVIQEQLPVITQVVERVIASFRKGGRLIYIGAGTSGRLGILDAAECVPTFGVSPNQVIGLIAGGERALIQAVEGAEDSKELAVTDLKALHLTAEDTVVGIAASGRTPYVVGGLDYARELGATTASISCNRDAVISRHADYPIEVETGPEVLTGSTRLKAGTAQKLVLNMISTTSMIGVGKVYQNLMVDVQPTNEKLEVRAKRMIAEATGVDMEMAARYFASSKGHVKTAIVMILADVSYEEAVKRLERANGFVREAL</sequence>
<name>MURQ_EXISA</name>
<organism>
    <name type="scientific">Exiguobacterium sp. (strain ATCC BAA-1283 / AT1b)</name>
    <dbReference type="NCBI Taxonomy" id="360911"/>
    <lineage>
        <taxon>Bacteria</taxon>
        <taxon>Bacillati</taxon>
        <taxon>Bacillota</taxon>
        <taxon>Bacilli</taxon>
        <taxon>Bacillales</taxon>
        <taxon>Bacillales Family XII. Incertae Sedis</taxon>
        <taxon>Exiguobacterium</taxon>
    </lineage>
</organism>
<gene>
    <name evidence="1" type="primary">murQ</name>
    <name type="ordered locus">EAT1b_1393</name>
</gene>